<feature type="signal peptide" evidence="2">
    <location>
        <begin position="1"/>
        <end position="31"/>
    </location>
</feature>
<feature type="chain" id="PRO_0000023719" description="Peroxidase 54">
    <location>
        <begin position="32"/>
        <end position="358"/>
    </location>
</feature>
<feature type="active site" description="Proton acceptor" evidence="3 4">
    <location>
        <position position="73"/>
    </location>
</feature>
<feature type="binding site" evidence="3">
    <location>
        <position position="74"/>
    </location>
    <ligand>
        <name>Ca(2+)</name>
        <dbReference type="ChEBI" id="CHEBI:29108"/>
        <label>1</label>
    </ligand>
</feature>
<feature type="binding site" evidence="3">
    <location>
        <position position="77"/>
    </location>
    <ligand>
        <name>Ca(2+)</name>
        <dbReference type="ChEBI" id="CHEBI:29108"/>
        <label>1</label>
    </ligand>
</feature>
<feature type="binding site" evidence="3">
    <location>
        <position position="79"/>
    </location>
    <ligand>
        <name>Ca(2+)</name>
        <dbReference type="ChEBI" id="CHEBI:29108"/>
        <label>1</label>
    </ligand>
</feature>
<feature type="binding site" evidence="3">
    <location>
        <position position="81"/>
    </location>
    <ligand>
        <name>Ca(2+)</name>
        <dbReference type="ChEBI" id="CHEBI:29108"/>
        <label>1</label>
    </ligand>
</feature>
<feature type="binding site" evidence="3">
    <location>
        <position position="83"/>
    </location>
    <ligand>
        <name>Ca(2+)</name>
        <dbReference type="ChEBI" id="CHEBI:29108"/>
        <label>1</label>
    </ligand>
</feature>
<feature type="binding site" evidence="3">
    <location>
        <position position="170"/>
    </location>
    <ligand>
        <name>substrate</name>
    </ligand>
</feature>
<feature type="binding site" description="axial binding residue" evidence="3">
    <location>
        <position position="200"/>
    </location>
    <ligand>
        <name>heme b</name>
        <dbReference type="ChEBI" id="CHEBI:60344"/>
    </ligand>
    <ligandPart>
        <name>Fe</name>
        <dbReference type="ChEBI" id="CHEBI:18248"/>
    </ligandPart>
</feature>
<feature type="binding site" evidence="3">
    <location>
        <position position="201"/>
    </location>
    <ligand>
        <name>Ca(2+)</name>
        <dbReference type="ChEBI" id="CHEBI:29108"/>
        <label>2</label>
    </ligand>
</feature>
<feature type="binding site" evidence="3">
    <location>
        <position position="252"/>
    </location>
    <ligand>
        <name>Ca(2+)</name>
        <dbReference type="ChEBI" id="CHEBI:29108"/>
        <label>2</label>
    </ligand>
</feature>
<feature type="binding site" evidence="3">
    <location>
        <position position="255"/>
    </location>
    <ligand>
        <name>Ca(2+)</name>
        <dbReference type="ChEBI" id="CHEBI:29108"/>
        <label>2</label>
    </ligand>
</feature>
<feature type="binding site" evidence="3">
    <location>
        <position position="260"/>
    </location>
    <ligand>
        <name>Ca(2+)</name>
        <dbReference type="ChEBI" id="CHEBI:29108"/>
        <label>2</label>
    </ligand>
</feature>
<feature type="site" description="Transition state stabilizer" evidence="3">
    <location>
        <position position="69"/>
    </location>
</feature>
<feature type="modified residue" description="Pyrrolidone carboxylic acid" evidence="1 3">
    <location>
        <position position="32"/>
    </location>
</feature>
<feature type="glycosylation site" description="N-linked (GlcNAc...) asparagine" evidence="2">
    <location>
        <position position="34"/>
    </location>
</feature>
<feature type="glycosylation site" description="N-linked (GlcNAc...) asparagine" evidence="2">
    <location>
        <position position="44"/>
    </location>
</feature>
<feature type="glycosylation site" description="N-linked (GlcNAc...) asparagine" evidence="2">
    <location>
        <position position="103"/>
    </location>
</feature>
<feature type="glycosylation site" description="N-linked (GlcNAc...) asparagine" evidence="2">
    <location>
        <position position="161"/>
    </location>
</feature>
<feature type="glycosylation site" description="N-linked (GlcNAc...) asparagine" evidence="2">
    <location>
        <position position="166"/>
    </location>
</feature>
<feature type="glycosylation site" description="N-linked (GlcNAc...) asparagine" evidence="2">
    <location>
        <position position="178"/>
    </location>
</feature>
<feature type="glycosylation site" description="N-linked (GlcNAc...) asparagine" evidence="2">
    <location>
        <position position="218"/>
    </location>
</feature>
<feature type="glycosylation site" description="N-linked (GlcNAc...) asparagine" evidence="2">
    <location>
        <position position="228"/>
    </location>
</feature>
<feature type="glycosylation site" description="N-linked (GlcNAc...) asparagine" evidence="2">
    <location>
        <position position="242"/>
    </location>
</feature>
<feature type="glycosylation site" description="N-linked (GlcNAc...) asparagine" evidence="2">
    <location>
        <position position="298"/>
    </location>
</feature>
<feature type="disulfide bond" evidence="3">
    <location>
        <begin position="42"/>
        <end position="122"/>
    </location>
</feature>
<feature type="disulfide bond" evidence="3">
    <location>
        <begin position="75"/>
        <end position="80"/>
    </location>
</feature>
<feature type="disulfide bond" evidence="3">
    <location>
        <begin position="128"/>
        <end position="330"/>
    </location>
</feature>
<feature type="disulfide bond" evidence="3">
    <location>
        <begin position="207"/>
        <end position="239"/>
    </location>
</feature>
<feature type="sequence conflict" description="In Ref. 5; AAM66044." evidence="5" ref="5">
    <original>I</original>
    <variation>V</variation>
    <location>
        <position position="21"/>
    </location>
</feature>
<feature type="sequence conflict" description="In Ref. 5; AAM66044." evidence="5" ref="5">
    <original>T</original>
    <variation>A</variation>
    <location>
        <position position="28"/>
    </location>
</feature>
<feature type="sequence conflict" description="In Ref. 5; AAM66044." evidence="5" ref="5">
    <original>K</original>
    <variation>N</variation>
    <location>
        <position position="189"/>
    </location>
</feature>
<gene>
    <name type="primary">PER54</name>
    <name type="synonym">P54</name>
    <name type="ordered locus">At5g06730</name>
    <name type="ORF">MPH15.9</name>
</gene>
<reference key="1">
    <citation type="submission" date="2000-05" db="EMBL/GenBank/DDBJ databases">
        <title>Structural analysis of Arabidopsis thaliana chromosome 5. XI.</title>
        <authorList>
            <person name="Kaneko T."/>
            <person name="Katoh T."/>
            <person name="Asamizu E."/>
            <person name="Sato S."/>
            <person name="Nakamura Y."/>
            <person name="Kotani H."/>
            <person name="Tabata S."/>
        </authorList>
    </citation>
    <scope>NUCLEOTIDE SEQUENCE [LARGE SCALE GENOMIC DNA]</scope>
    <source>
        <strain>cv. Columbia</strain>
    </source>
</reference>
<reference key="2">
    <citation type="journal article" date="2017" name="Plant J.">
        <title>Araport11: a complete reannotation of the Arabidopsis thaliana reference genome.</title>
        <authorList>
            <person name="Cheng C.Y."/>
            <person name="Krishnakumar V."/>
            <person name="Chan A.P."/>
            <person name="Thibaud-Nissen F."/>
            <person name="Schobel S."/>
            <person name="Town C.D."/>
        </authorList>
    </citation>
    <scope>GENOME REANNOTATION</scope>
    <source>
        <strain>cv. Columbia</strain>
    </source>
</reference>
<reference key="3">
    <citation type="journal article" date="2002" name="Science">
        <title>Functional annotation of a full-length Arabidopsis cDNA collection.</title>
        <authorList>
            <person name="Seki M."/>
            <person name="Narusaka M."/>
            <person name="Kamiya A."/>
            <person name="Ishida J."/>
            <person name="Satou M."/>
            <person name="Sakurai T."/>
            <person name="Nakajima M."/>
            <person name="Enju A."/>
            <person name="Akiyama K."/>
            <person name="Oono Y."/>
            <person name="Muramatsu M."/>
            <person name="Hayashizaki Y."/>
            <person name="Kawai J."/>
            <person name="Carninci P."/>
            <person name="Itoh M."/>
            <person name="Ishii Y."/>
            <person name="Arakawa T."/>
            <person name="Shibata K."/>
            <person name="Shinagawa A."/>
            <person name="Shinozaki K."/>
        </authorList>
    </citation>
    <scope>NUCLEOTIDE SEQUENCE [LARGE SCALE MRNA]</scope>
    <source>
        <strain>cv. Columbia</strain>
    </source>
</reference>
<reference key="4">
    <citation type="journal article" date="2003" name="Science">
        <title>Empirical analysis of transcriptional activity in the Arabidopsis genome.</title>
        <authorList>
            <person name="Yamada K."/>
            <person name="Lim J."/>
            <person name="Dale J.M."/>
            <person name="Chen H."/>
            <person name="Shinn P."/>
            <person name="Palm C.J."/>
            <person name="Southwick A.M."/>
            <person name="Wu H.C."/>
            <person name="Kim C.J."/>
            <person name="Nguyen M."/>
            <person name="Pham P.K."/>
            <person name="Cheuk R.F."/>
            <person name="Karlin-Newmann G."/>
            <person name="Liu S.X."/>
            <person name="Lam B."/>
            <person name="Sakano H."/>
            <person name="Wu T."/>
            <person name="Yu G."/>
            <person name="Miranda M."/>
            <person name="Quach H.L."/>
            <person name="Tripp M."/>
            <person name="Chang C.H."/>
            <person name="Lee J.M."/>
            <person name="Toriumi M.J."/>
            <person name="Chan M.M."/>
            <person name="Tang C.C."/>
            <person name="Onodera C.S."/>
            <person name="Deng J.M."/>
            <person name="Akiyama K."/>
            <person name="Ansari Y."/>
            <person name="Arakawa T."/>
            <person name="Banh J."/>
            <person name="Banno F."/>
            <person name="Bowser L."/>
            <person name="Brooks S.Y."/>
            <person name="Carninci P."/>
            <person name="Chao Q."/>
            <person name="Choy N."/>
            <person name="Enju A."/>
            <person name="Goldsmith A.D."/>
            <person name="Gurjal M."/>
            <person name="Hansen N.F."/>
            <person name="Hayashizaki Y."/>
            <person name="Johnson-Hopson C."/>
            <person name="Hsuan V.W."/>
            <person name="Iida K."/>
            <person name="Karnes M."/>
            <person name="Khan S."/>
            <person name="Koesema E."/>
            <person name="Ishida J."/>
            <person name="Jiang P.X."/>
            <person name="Jones T."/>
            <person name="Kawai J."/>
            <person name="Kamiya A."/>
            <person name="Meyers C."/>
            <person name="Nakajima M."/>
            <person name="Narusaka M."/>
            <person name="Seki M."/>
            <person name="Sakurai T."/>
            <person name="Satou M."/>
            <person name="Tamse R."/>
            <person name="Vaysberg M."/>
            <person name="Wallender E.K."/>
            <person name="Wong C."/>
            <person name="Yamamura Y."/>
            <person name="Yuan S."/>
            <person name="Shinozaki K."/>
            <person name="Davis R.W."/>
            <person name="Theologis A."/>
            <person name="Ecker J.R."/>
        </authorList>
    </citation>
    <scope>NUCLEOTIDE SEQUENCE [LARGE SCALE MRNA]</scope>
    <source>
        <strain>cv. Columbia</strain>
    </source>
</reference>
<reference key="5">
    <citation type="submission" date="2002-03" db="EMBL/GenBank/DDBJ databases">
        <title>Full-length cDNA from Arabidopsis thaliana.</title>
        <authorList>
            <person name="Brover V.V."/>
            <person name="Troukhan M.E."/>
            <person name="Alexandrov N.A."/>
            <person name="Lu Y.-P."/>
            <person name="Flavell R.B."/>
            <person name="Feldmann K.A."/>
        </authorList>
    </citation>
    <scope>NUCLEOTIDE SEQUENCE [LARGE SCALE MRNA]</scope>
</reference>
<reference key="6">
    <citation type="submission" date="1997-03" db="EMBL/GenBank/DDBJ databases">
        <title>From expressed sequence tags to structure, function, evolution and expression of 28 ER-targeted Arabidopsis peroxidases.</title>
        <authorList>
            <person name="Welinder K.G."/>
            <person name="Jespersen H.M."/>
            <person name="Kjaersgaard I.V.H."/>
            <person name="Justesen A.F."/>
            <person name="Oestergaard L."/>
            <person name="Abelskov A.K."/>
            <person name="Jensen R.B."/>
            <person name="Hansen L.N."/>
            <person name="Rasmussen S.K."/>
        </authorList>
    </citation>
    <scope>NUCLEOTIDE SEQUENCE [MRNA] OF 212-358</scope>
    <source>
        <strain>cv. Columbia</strain>
        <tissue>Root</tissue>
    </source>
</reference>
<reference key="7">
    <citation type="journal article" date="2002" name="Gene">
        <title>Analysis and expression of the class III peroxidase large gene family in Arabidopsis thaliana.</title>
        <authorList>
            <person name="Tognolli M."/>
            <person name="Penel C."/>
            <person name="Greppin H."/>
            <person name="Simon P."/>
        </authorList>
    </citation>
    <scope>GENE FAMILY ORGANIZATION</scope>
    <scope>NOMENCLATURE</scope>
    <source>
        <strain>cv. Columbia</strain>
    </source>
</reference>
<sequence length="358" mass="37290">MAVTSSSSTCDGFFIISLIVIVSSLFGTSSAQLNATFYSGTCPNASAIVRSTIQQALQSDARIGGSLIRLHFHDCFVNGCDGSLLLDDTSSIQSEKNAPANANSTRGFNVVDSIKTALENACPGIVSCSDILALASEASVSLAGGPSWTVLLGRRDGLTANLSGANSSLPSPFEGLNNITSKFVAVGLKTTDVVSLSGAHTFGRGQCVTFNNRLFNFNGTGNPDPTLNSTLLSSLQQLCPQNGSNTGITNLDLSTPDAFDNNYFTNLQSNNGLLQSDQELFSNTGSATVPIVNSFASNQTLFFEAFVQSMIKMGNISPLTGSSGEIRQDCKVVNGQSSATEAGDIQLQSDGPVSVADM</sequence>
<evidence type="ECO:0000250" key="1">
    <source>
        <dbReference type="UniProtKB" id="Q42578"/>
    </source>
</evidence>
<evidence type="ECO:0000255" key="2"/>
<evidence type="ECO:0000255" key="3">
    <source>
        <dbReference type="PROSITE-ProRule" id="PRU00297"/>
    </source>
</evidence>
<evidence type="ECO:0000255" key="4">
    <source>
        <dbReference type="PROSITE-ProRule" id="PRU10012"/>
    </source>
</evidence>
<evidence type="ECO:0000305" key="5"/>
<name>PER54_ARATH</name>
<comment type="function">
    <text>Removal of H(2)O(2), oxidation of toxic reductants, biosynthesis and degradation of lignin, suberization, auxin catabolism, response to environmental stresses such as wounding, pathogen attack and oxidative stress. These functions might be dependent on each isozyme/isoform in each plant tissue.</text>
</comment>
<comment type="catalytic activity">
    <reaction>
        <text>2 a phenolic donor + H2O2 = 2 a phenolic radical donor + 2 H2O</text>
        <dbReference type="Rhea" id="RHEA:56136"/>
        <dbReference type="ChEBI" id="CHEBI:15377"/>
        <dbReference type="ChEBI" id="CHEBI:16240"/>
        <dbReference type="ChEBI" id="CHEBI:139520"/>
        <dbReference type="ChEBI" id="CHEBI:139521"/>
        <dbReference type="EC" id="1.11.1.7"/>
    </reaction>
</comment>
<comment type="cofactor">
    <cofactor evidence="3">
        <name>heme b</name>
        <dbReference type="ChEBI" id="CHEBI:60344"/>
    </cofactor>
    <text evidence="3">Binds 1 heme b (iron(II)-protoporphyrin IX) group per subunit.</text>
</comment>
<comment type="cofactor">
    <cofactor evidence="3">
        <name>Ca(2+)</name>
        <dbReference type="ChEBI" id="CHEBI:29108"/>
    </cofactor>
    <text evidence="3">Binds 2 calcium ions per subunit.</text>
</comment>
<comment type="subcellular location">
    <subcellularLocation>
        <location evidence="5">Secreted</location>
    </subcellularLocation>
    <subcellularLocation>
        <location evidence="5">Vacuole</location>
    </subcellularLocation>
    <text>Carboxy-terminal extension appears to target the protein to vacuoles.</text>
</comment>
<comment type="miscellaneous">
    <text>There are 73 peroxidase genes in A.thaliana.</text>
</comment>
<comment type="similarity">
    <text evidence="3">Belongs to the peroxidase family. Classical plant (class III) peroxidase subfamily.</text>
</comment>
<organism>
    <name type="scientific">Arabidopsis thaliana</name>
    <name type="common">Mouse-ear cress</name>
    <dbReference type="NCBI Taxonomy" id="3702"/>
    <lineage>
        <taxon>Eukaryota</taxon>
        <taxon>Viridiplantae</taxon>
        <taxon>Streptophyta</taxon>
        <taxon>Embryophyta</taxon>
        <taxon>Tracheophyta</taxon>
        <taxon>Spermatophyta</taxon>
        <taxon>Magnoliopsida</taxon>
        <taxon>eudicotyledons</taxon>
        <taxon>Gunneridae</taxon>
        <taxon>Pentapetalae</taxon>
        <taxon>rosids</taxon>
        <taxon>malvids</taxon>
        <taxon>Brassicales</taxon>
        <taxon>Brassicaceae</taxon>
        <taxon>Camelineae</taxon>
        <taxon>Arabidopsis</taxon>
    </lineage>
</organism>
<accession>Q9FG34</accession>
<accession>P93729</accession>
<proteinExistence type="evidence at transcript level"/>
<keyword id="KW-0106">Calcium</keyword>
<keyword id="KW-1015">Disulfide bond</keyword>
<keyword id="KW-0325">Glycoprotein</keyword>
<keyword id="KW-0349">Heme</keyword>
<keyword id="KW-0376">Hydrogen peroxide</keyword>
<keyword id="KW-0408">Iron</keyword>
<keyword id="KW-0479">Metal-binding</keyword>
<keyword id="KW-0560">Oxidoreductase</keyword>
<keyword id="KW-0575">Peroxidase</keyword>
<keyword id="KW-0873">Pyrrolidone carboxylic acid</keyword>
<keyword id="KW-1185">Reference proteome</keyword>
<keyword id="KW-0964">Secreted</keyword>
<keyword id="KW-0732">Signal</keyword>
<keyword id="KW-0926">Vacuole</keyword>
<protein>
    <recommendedName>
        <fullName>Peroxidase 54</fullName>
        <shortName>Atperox P54</shortName>
        <ecNumber>1.11.1.7</ecNumber>
    </recommendedName>
    <alternativeName>
        <fullName>ATP29a</fullName>
    </alternativeName>
</protein>
<dbReference type="EC" id="1.11.1.7"/>
<dbReference type="EMBL" id="AP002032">
    <property type="protein sequence ID" value="BAB09807.1"/>
    <property type="molecule type" value="Genomic_DNA"/>
</dbReference>
<dbReference type="EMBL" id="CP002688">
    <property type="protein sequence ID" value="AED91056.1"/>
    <property type="molecule type" value="Genomic_DNA"/>
</dbReference>
<dbReference type="EMBL" id="AK118827">
    <property type="protein sequence ID" value="BAC43417.1"/>
    <property type="molecule type" value="mRNA"/>
</dbReference>
<dbReference type="EMBL" id="BT008584">
    <property type="protein sequence ID" value="AAP40411.1"/>
    <property type="molecule type" value="mRNA"/>
</dbReference>
<dbReference type="EMBL" id="AY088509">
    <property type="protein sequence ID" value="AAM66044.1"/>
    <property type="molecule type" value="mRNA"/>
</dbReference>
<dbReference type="EMBL" id="Y11794">
    <property type="protein sequence ID" value="CAA72490.1"/>
    <property type="molecule type" value="mRNA"/>
</dbReference>
<dbReference type="RefSeq" id="NP_196291.1">
    <property type="nucleotide sequence ID" value="NM_120756.3"/>
</dbReference>
<dbReference type="SMR" id="Q9FG34"/>
<dbReference type="FunCoup" id="Q9FG34">
    <property type="interactions" value="284"/>
</dbReference>
<dbReference type="STRING" id="3702.Q9FG34"/>
<dbReference type="PeroxiBase" id="220">
    <property type="entry name" value="AtPrx54"/>
</dbReference>
<dbReference type="GlyCosmos" id="Q9FG34">
    <property type="glycosylation" value="10 sites, No reported glycans"/>
</dbReference>
<dbReference type="GlyGen" id="Q9FG34">
    <property type="glycosylation" value="10 sites"/>
</dbReference>
<dbReference type="iPTMnet" id="Q9FG34"/>
<dbReference type="PaxDb" id="3702-AT5G06730.1"/>
<dbReference type="ProteomicsDB" id="236457"/>
<dbReference type="EnsemblPlants" id="AT5G06730.1">
    <property type="protein sequence ID" value="AT5G06730.1"/>
    <property type="gene ID" value="AT5G06730"/>
</dbReference>
<dbReference type="GeneID" id="830562"/>
<dbReference type="Gramene" id="AT5G06730.1">
    <property type="protein sequence ID" value="AT5G06730.1"/>
    <property type="gene ID" value="AT5G06730"/>
</dbReference>
<dbReference type="KEGG" id="ath:AT5G06730"/>
<dbReference type="Araport" id="AT5G06730"/>
<dbReference type="TAIR" id="AT5G06730"/>
<dbReference type="eggNOG" id="ENOG502QVXS">
    <property type="taxonomic scope" value="Eukaryota"/>
</dbReference>
<dbReference type="HOGENOM" id="CLU_010543_0_1_1"/>
<dbReference type="InParanoid" id="Q9FG34"/>
<dbReference type="OMA" id="ASAWPVM"/>
<dbReference type="PhylomeDB" id="Q9FG34"/>
<dbReference type="BioCyc" id="ARA:AT5G06730-MONOMER"/>
<dbReference type="PRO" id="PR:Q9FG34"/>
<dbReference type="Proteomes" id="UP000006548">
    <property type="component" value="Chromosome 5"/>
</dbReference>
<dbReference type="ExpressionAtlas" id="Q9FG34">
    <property type="expression patterns" value="baseline and differential"/>
</dbReference>
<dbReference type="GO" id="GO:0005576">
    <property type="term" value="C:extracellular region"/>
    <property type="evidence" value="ECO:0007669"/>
    <property type="project" value="UniProtKB-SubCell"/>
</dbReference>
<dbReference type="GO" id="GO:0000325">
    <property type="term" value="C:plant-type vacuole"/>
    <property type="evidence" value="ECO:0007005"/>
    <property type="project" value="TAIR"/>
</dbReference>
<dbReference type="GO" id="GO:0020037">
    <property type="term" value="F:heme binding"/>
    <property type="evidence" value="ECO:0007669"/>
    <property type="project" value="InterPro"/>
</dbReference>
<dbReference type="GO" id="GO:0140825">
    <property type="term" value="F:lactoperoxidase activity"/>
    <property type="evidence" value="ECO:0007669"/>
    <property type="project" value="UniProtKB-EC"/>
</dbReference>
<dbReference type="GO" id="GO:0046872">
    <property type="term" value="F:metal ion binding"/>
    <property type="evidence" value="ECO:0007669"/>
    <property type="project" value="UniProtKB-KW"/>
</dbReference>
<dbReference type="GO" id="GO:0042744">
    <property type="term" value="P:hydrogen peroxide catabolic process"/>
    <property type="evidence" value="ECO:0007669"/>
    <property type="project" value="UniProtKB-KW"/>
</dbReference>
<dbReference type="GO" id="GO:0006979">
    <property type="term" value="P:response to oxidative stress"/>
    <property type="evidence" value="ECO:0007669"/>
    <property type="project" value="InterPro"/>
</dbReference>
<dbReference type="CDD" id="cd00693">
    <property type="entry name" value="secretory_peroxidase"/>
    <property type="match status" value="1"/>
</dbReference>
<dbReference type="FunFam" id="1.10.420.10:FF:000001">
    <property type="entry name" value="Peroxidase"/>
    <property type="match status" value="1"/>
</dbReference>
<dbReference type="FunFam" id="1.10.520.10:FF:000001">
    <property type="entry name" value="Peroxidase"/>
    <property type="match status" value="1"/>
</dbReference>
<dbReference type="Gene3D" id="1.10.520.10">
    <property type="match status" value="1"/>
</dbReference>
<dbReference type="Gene3D" id="1.10.420.10">
    <property type="entry name" value="Peroxidase, domain 2"/>
    <property type="match status" value="1"/>
</dbReference>
<dbReference type="InterPro" id="IPR002016">
    <property type="entry name" value="Haem_peroxidase"/>
</dbReference>
<dbReference type="InterPro" id="IPR010255">
    <property type="entry name" value="Haem_peroxidase_sf"/>
</dbReference>
<dbReference type="InterPro" id="IPR000823">
    <property type="entry name" value="Peroxidase_pln"/>
</dbReference>
<dbReference type="InterPro" id="IPR019794">
    <property type="entry name" value="Peroxidases_AS"/>
</dbReference>
<dbReference type="InterPro" id="IPR019793">
    <property type="entry name" value="Peroxidases_heam-ligand_BS"/>
</dbReference>
<dbReference type="InterPro" id="IPR033905">
    <property type="entry name" value="Secretory_peroxidase"/>
</dbReference>
<dbReference type="PANTHER" id="PTHR31388:SF129">
    <property type="entry name" value="PEROXIDASE 54"/>
    <property type="match status" value="1"/>
</dbReference>
<dbReference type="PANTHER" id="PTHR31388">
    <property type="entry name" value="PEROXIDASE 72-RELATED"/>
    <property type="match status" value="1"/>
</dbReference>
<dbReference type="Pfam" id="PF00141">
    <property type="entry name" value="peroxidase"/>
    <property type="match status" value="1"/>
</dbReference>
<dbReference type="PRINTS" id="PR00458">
    <property type="entry name" value="PEROXIDASE"/>
</dbReference>
<dbReference type="PRINTS" id="PR00461">
    <property type="entry name" value="PLPEROXIDASE"/>
</dbReference>
<dbReference type="SUPFAM" id="SSF48113">
    <property type="entry name" value="Heme-dependent peroxidases"/>
    <property type="match status" value="1"/>
</dbReference>
<dbReference type="PROSITE" id="PS00435">
    <property type="entry name" value="PEROXIDASE_1"/>
    <property type="match status" value="1"/>
</dbReference>
<dbReference type="PROSITE" id="PS00436">
    <property type="entry name" value="PEROXIDASE_2"/>
    <property type="match status" value="1"/>
</dbReference>
<dbReference type="PROSITE" id="PS50873">
    <property type="entry name" value="PEROXIDASE_4"/>
    <property type="match status" value="1"/>
</dbReference>